<dbReference type="EMBL" id="Y14080">
    <property type="protein sequence ID" value="CAA74445.1"/>
    <property type="molecule type" value="Genomic_DNA"/>
</dbReference>
<dbReference type="EMBL" id="AL009126">
    <property type="protein sequence ID" value="CAB12818.1"/>
    <property type="molecule type" value="Genomic_DNA"/>
</dbReference>
<dbReference type="PIR" id="B69828">
    <property type="entry name" value="B69828"/>
</dbReference>
<dbReference type="RefSeq" id="NP_388860.1">
    <property type="nucleotide sequence ID" value="NC_000964.3"/>
</dbReference>
<dbReference type="RefSeq" id="WP_003245756.1">
    <property type="nucleotide sequence ID" value="NZ_OZ025638.1"/>
</dbReference>
<dbReference type="FunCoup" id="O07543">
    <property type="interactions" value="25"/>
</dbReference>
<dbReference type="STRING" id="224308.BSU09790"/>
<dbReference type="PaxDb" id="224308-BSU09790"/>
<dbReference type="DNASU" id="939764"/>
<dbReference type="EnsemblBacteria" id="CAB12818">
    <property type="protein sequence ID" value="CAB12818"/>
    <property type="gene ID" value="BSU_09790"/>
</dbReference>
<dbReference type="GeneID" id="939764"/>
<dbReference type="KEGG" id="bsu:BSU09790"/>
<dbReference type="PATRIC" id="fig|224308.179.peg.1052"/>
<dbReference type="eggNOG" id="COG4399">
    <property type="taxonomic scope" value="Bacteria"/>
</dbReference>
<dbReference type="InParanoid" id="O07543"/>
<dbReference type="OrthoDB" id="9787430at2"/>
<dbReference type="PhylomeDB" id="O07543"/>
<dbReference type="BioCyc" id="BSUB:BSU09790-MONOMER"/>
<dbReference type="Proteomes" id="UP000001570">
    <property type="component" value="Chromosome"/>
</dbReference>
<dbReference type="GO" id="GO:0005886">
    <property type="term" value="C:plasma membrane"/>
    <property type="evidence" value="ECO:0007669"/>
    <property type="project" value="UniProtKB-SubCell"/>
</dbReference>
<dbReference type="InterPro" id="IPR007383">
    <property type="entry name" value="DUF445"/>
</dbReference>
<dbReference type="InterPro" id="IPR016991">
    <property type="entry name" value="UCP032178"/>
</dbReference>
<dbReference type="PANTHER" id="PTHR35791">
    <property type="entry name" value="UPF0754 MEMBRANE PROTEIN YHEB"/>
    <property type="match status" value="1"/>
</dbReference>
<dbReference type="PANTHER" id="PTHR35791:SF1">
    <property type="entry name" value="UPF0754 MEMBRANE PROTEIN YHEB"/>
    <property type="match status" value="1"/>
</dbReference>
<dbReference type="Pfam" id="PF04286">
    <property type="entry name" value="DUF445"/>
    <property type="match status" value="1"/>
</dbReference>
<dbReference type="PIRSF" id="PIRSF032178">
    <property type="entry name" value="UCP032178"/>
    <property type="match status" value="1"/>
</dbReference>
<reference key="1">
    <citation type="journal article" date="1998" name="Microbiology">
        <title>The 172 kb prkA-addAB region from 83 degrees to 97 degrees of the Bacillus subtilis chromosome contains several dysfunctional genes, the glyB marker, many genes encoding transporter proteins, and the ubiquitous hit gene.</title>
        <authorList>
            <person name="Noback M.A."/>
            <person name="Holsappel S."/>
            <person name="Kiewiet R."/>
            <person name="Terpstra P."/>
            <person name="Wambutt R."/>
            <person name="Wedler H."/>
            <person name="Venema G."/>
            <person name="Bron S."/>
        </authorList>
    </citation>
    <scope>NUCLEOTIDE SEQUENCE [GENOMIC DNA]</scope>
    <source>
        <strain>168</strain>
    </source>
</reference>
<reference key="2">
    <citation type="journal article" date="1997" name="Nature">
        <title>The complete genome sequence of the Gram-positive bacterium Bacillus subtilis.</title>
        <authorList>
            <person name="Kunst F."/>
            <person name="Ogasawara N."/>
            <person name="Moszer I."/>
            <person name="Albertini A.M."/>
            <person name="Alloni G."/>
            <person name="Azevedo V."/>
            <person name="Bertero M.G."/>
            <person name="Bessieres P."/>
            <person name="Bolotin A."/>
            <person name="Borchert S."/>
            <person name="Borriss R."/>
            <person name="Boursier L."/>
            <person name="Brans A."/>
            <person name="Braun M."/>
            <person name="Brignell S.C."/>
            <person name="Bron S."/>
            <person name="Brouillet S."/>
            <person name="Bruschi C.V."/>
            <person name="Caldwell B."/>
            <person name="Capuano V."/>
            <person name="Carter N.M."/>
            <person name="Choi S.-K."/>
            <person name="Codani J.-J."/>
            <person name="Connerton I.F."/>
            <person name="Cummings N.J."/>
            <person name="Daniel R.A."/>
            <person name="Denizot F."/>
            <person name="Devine K.M."/>
            <person name="Duesterhoeft A."/>
            <person name="Ehrlich S.D."/>
            <person name="Emmerson P.T."/>
            <person name="Entian K.-D."/>
            <person name="Errington J."/>
            <person name="Fabret C."/>
            <person name="Ferrari E."/>
            <person name="Foulger D."/>
            <person name="Fritz C."/>
            <person name="Fujita M."/>
            <person name="Fujita Y."/>
            <person name="Fuma S."/>
            <person name="Galizzi A."/>
            <person name="Galleron N."/>
            <person name="Ghim S.-Y."/>
            <person name="Glaser P."/>
            <person name="Goffeau A."/>
            <person name="Golightly E.J."/>
            <person name="Grandi G."/>
            <person name="Guiseppi G."/>
            <person name="Guy B.J."/>
            <person name="Haga K."/>
            <person name="Haiech J."/>
            <person name="Harwood C.R."/>
            <person name="Henaut A."/>
            <person name="Hilbert H."/>
            <person name="Holsappel S."/>
            <person name="Hosono S."/>
            <person name="Hullo M.-F."/>
            <person name="Itaya M."/>
            <person name="Jones L.-M."/>
            <person name="Joris B."/>
            <person name="Karamata D."/>
            <person name="Kasahara Y."/>
            <person name="Klaerr-Blanchard M."/>
            <person name="Klein C."/>
            <person name="Kobayashi Y."/>
            <person name="Koetter P."/>
            <person name="Koningstein G."/>
            <person name="Krogh S."/>
            <person name="Kumano M."/>
            <person name="Kurita K."/>
            <person name="Lapidus A."/>
            <person name="Lardinois S."/>
            <person name="Lauber J."/>
            <person name="Lazarevic V."/>
            <person name="Lee S.-M."/>
            <person name="Levine A."/>
            <person name="Liu H."/>
            <person name="Masuda S."/>
            <person name="Mauel C."/>
            <person name="Medigue C."/>
            <person name="Medina N."/>
            <person name="Mellado R.P."/>
            <person name="Mizuno M."/>
            <person name="Moestl D."/>
            <person name="Nakai S."/>
            <person name="Noback M."/>
            <person name="Noone D."/>
            <person name="O'Reilly M."/>
            <person name="Ogawa K."/>
            <person name="Ogiwara A."/>
            <person name="Oudega B."/>
            <person name="Park S.-H."/>
            <person name="Parro V."/>
            <person name="Pohl T.M."/>
            <person name="Portetelle D."/>
            <person name="Porwollik S."/>
            <person name="Prescott A.M."/>
            <person name="Presecan E."/>
            <person name="Pujic P."/>
            <person name="Purnelle B."/>
            <person name="Rapoport G."/>
            <person name="Rey M."/>
            <person name="Reynolds S."/>
            <person name="Rieger M."/>
            <person name="Rivolta C."/>
            <person name="Rocha E."/>
            <person name="Roche B."/>
            <person name="Rose M."/>
            <person name="Sadaie Y."/>
            <person name="Sato T."/>
            <person name="Scanlan E."/>
            <person name="Schleich S."/>
            <person name="Schroeter R."/>
            <person name="Scoffone F."/>
            <person name="Sekiguchi J."/>
            <person name="Sekowska A."/>
            <person name="Seror S.J."/>
            <person name="Serror P."/>
            <person name="Shin B.-S."/>
            <person name="Soldo B."/>
            <person name="Sorokin A."/>
            <person name="Tacconi E."/>
            <person name="Takagi T."/>
            <person name="Takahashi H."/>
            <person name="Takemaru K."/>
            <person name="Takeuchi M."/>
            <person name="Tamakoshi A."/>
            <person name="Tanaka T."/>
            <person name="Terpstra P."/>
            <person name="Tognoni A."/>
            <person name="Tosato V."/>
            <person name="Uchiyama S."/>
            <person name="Vandenbol M."/>
            <person name="Vannier F."/>
            <person name="Vassarotti A."/>
            <person name="Viari A."/>
            <person name="Wambutt R."/>
            <person name="Wedler E."/>
            <person name="Wedler H."/>
            <person name="Weitzenegger T."/>
            <person name="Winters P."/>
            <person name="Wipat A."/>
            <person name="Yamamoto H."/>
            <person name="Yamane K."/>
            <person name="Yasumoto K."/>
            <person name="Yata K."/>
            <person name="Yoshida K."/>
            <person name="Yoshikawa H.-F."/>
            <person name="Zumstein E."/>
            <person name="Yoshikawa H."/>
            <person name="Danchin A."/>
        </authorList>
    </citation>
    <scope>NUCLEOTIDE SEQUENCE [LARGE SCALE GENOMIC DNA]</scope>
    <source>
        <strain>168</strain>
    </source>
</reference>
<proteinExistence type="inferred from homology"/>
<accession>O07543</accession>
<accession>Q796W1</accession>
<protein>
    <recommendedName>
        <fullName>UPF0754 membrane protein YheB</fullName>
    </recommendedName>
</protein>
<comment type="subcellular location">
    <subcellularLocation>
        <location evidence="1">Cell membrane</location>
        <topology evidence="1">Multi-pass membrane protein</topology>
    </subcellularLocation>
</comment>
<comment type="similarity">
    <text evidence="3">Belongs to the UPF0754 family.</text>
</comment>
<name>YHEB_BACSU</name>
<sequence length="377" mass="42908">MGIAGTFIFMIVIGAAIGAVTNHLAIQMLFRPYKAYYLFGKRVPFTPGLIPRRRDELAKQMGLMVVNHLLTPEGIKKRLVSDAAKTQALRVGEQLIQKLSLSEVTVKEALEKAGMKRPEKAADAWISSWTDDKLHELFRQYGDQSLKELVPIEVQEKLEEKIPMISGYILSRSVRYFESDEGKIRLGNMIDDFLKERGMLGSMVQLFLGNSSLADRVLPELLKFLRNEETNKLLSDLLKNEWGKLREYTFNEADEKWNAKALIFSLKRRVLQAFSTAPFFNNTIGTLTVRYESELTQQMLPALLDKLLEGISSNLESVLKRLRLEEIVKEQVDQFPVERLEEMVLSISKKEFKMITYLGGLLGGIIGAIQALFVILF</sequence>
<evidence type="ECO:0000250" key="1"/>
<evidence type="ECO:0000255" key="2"/>
<evidence type="ECO:0000305" key="3"/>
<feature type="chain" id="PRO_0000388283" description="UPF0754 membrane protein YheB">
    <location>
        <begin position="1"/>
        <end position="377"/>
    </location>
</feature>
<feature type="transmembrane region" description="Helical" evidence="2">
    <location>
        <begin position="1"/>
        <end position="21"/>
    </location>
</feature>
<feature type="transmembrane region" description="Helical" evidence="2">
    <location>
        <begin position="357"/>
        <end position="377"/>
    </location>
</feature>
<keyword id="KW-1003">Cell membrane</keyword>
<keyword id="KW-0472">Membrane</keyword>
<keyword id="KW-1185">Reference proteome</keyword>
<keyword id="KW-0812">Transmembrane</keyword>
<keyword id="KW-1133">Transmembrane helix</keyword>
<organism>
    <name type="scientific">Bacillus subtilis (strain 168)</name>
    <dbReference type="NCBI Taxonomy" id="224308"/>
    <lineage>
        <taxon>Bacteria</taxon>
        <taxon>Bacillati</taxon>
        <taxon>Bacillota</taxon>
        <taxon>Bacilli</taxon>
        <taxon>Bacillales</taxon>
        <taxon>Bacillaceae</taxon>
        <taxon>Bacillus</taxon>
    </lineage>
</organism>
<gene>
    <name type="primary">yheB</name>
    <name type="ordered locus">BSU09790</name>
</gene>